<evidence type="ECO:0000250" key="1">
    <source>
        <dbReference type="UniProtKB" id="O88597"/>
    </source>
</evidence>
<evidence type="ECO:0000250" key="2">
    <source>
        <dbReference type="UniProtKB" id="Q14457"/>
    </source>
</evidence>
<evidence type="ECO:0000255" key="3"/>
<evidence type="ECO:0000256" key="4">
    <source>
        <dbReference type="SAM" id="MobiDB-lite"/>
    </source>
</evidence>
<evidence type="ECO:0000305" key="5"/>
<protein>
    <recommendedName>
        <fullName>Beclin-1</fullName>
    </recommendedName>
</protein>
<name>BECN1_CHICK</name>
<dbReference type="EMBL" id="AJ720008">
    <property type="protein sequence ID" value="CAG31667.1"/>
    <property type="molecule type" value="mRNA"/>
</dbReference>
<dbReference type="RefSeq" id="NP_001006332.1">
    <property type="nucleotide sequence ID" value="NM_001006332.1"/>
</dbReference>
<dbReference type="SMR" id="Q5ZKS6"/>
<dbReference type="FunCoup" id="Q5ZKS6">
    <property type="interactions" value="1593"/>
</dbReference>
<dbReference type="STRING" id="9031.ENSGALP00000004697"/>
<dbReference type="PaxDb" id="9031-ENSGALP00000004697"/>
<dbReference type="GeneID" id="420018"/>
<dbReference type="KEGG" id="gga:420018"/>
<dbReference type="CTD" id="8678"/>
<dbReference type="VEuPathDB" id="HostDB:geneid_420018"/>
<dbReference type="eggNOG" id="KOG2751">
    <property type="taxonomic scope" value="Eukaryota"/>
</dbReference>
<dbReference type="InParanoid" id="Q5ZKS6"/>
<dbReference type="OMA" id="EWDVYKA"/>
<dbReference type="OrthoDB" id="20368at2759"/>
<dbReference type="PhylomeDB" id="Q5ZKS6"/>
<dbReference type="PRO" id="PR:Q5ZKS6"/>
<dbReference type="Proteomes" id="UP000000539">
    <property type="component" value="Unassembled WGS sequence"/>
</dbReference>
<dbReference type="GO" id="GO:0005776">
    <property type="term" value="C:autophagosome"/>
    <property type="evidence" value="ECO:0007669"/>
    <property type="project" value="UniProtKB-SubCell"/>
</dbReference>
<dbReference type="GO" id="GO:0005789">
    <property type="term" value="C:endoplasmic reticulum membrane"/>
    <property type="evidence" value="ECO:0007669"/>
    <property type="project" value="UniProtKB-SubCell"/>
</dbReference>
<dbReference type="GO" id="GO:0010008">
    <property type="term" value="C:endosome membrane"/>
    <property type="evidence" value="ECO:0007669"/>
    <property type="project" value="UniProtKB-SubCell"/>
</dbReference>
<dbReference type="GO" id="GO:0005794">
    <property type="term" value="C:Golgi apparatus"/>
    <property type="evidence" value="ECO:0007669"/>
    <property type="project" value="UniProtKB-SubCell"/>
</dbReference>
<dbReference type="GO" id="GO:0031966">
    <property type="term" value="C:mitochondrial membrane"/>
    <property type="evidence" value="ECO:0007669"/>
    <property type="project" value="UniProtKB-SubCell"/>
</dbReference>
<dbReference type="GO" id="GO:0000407">
    <property type="term" value="C:phagophore assembly site"/>
    <property type="evidence" value="ECO:0000318"/>
    <property type="project" value="GO_Central"/>
</dbReference>
<dbReference type="GO" id="GO:0034271">
    <property type="term" value="C:phosphatidylinositol 3-kinase complex, class III, type I"/>
    <property type="evidence" value="ECO:0000318"/>
    <property type="project" value="GO_Central"/>
</dbReference>
<dbReference type="GO" id="GO:0034272">
    <property type="term" value="C:phosphatidylinositol 3-kinase complex, class III, type II"/>
    <property type="evidence" value="ECO:0000318"/>
    <property type="project" value="GO_Central"/>
</dbReference>
<dbReference type="GO" id="GO:0043548">
    <property type="term" value="F:phosphatidylinositol 3-kinase binding"/>
    <property type="evidence" value="ECO:0000318"/>
    <property type="project" value="GO_Central"/>
</dbReference>
<dbReference type="GO" id="GO:0030674">
    <property type="term" value="F:protein-macromolecule adaptor activity"/>
    <property type="evidence" value="ECO:0000318"/>
    <property type="project" value="GO_Central"/>
</dbReference>
<dbReference type="GO" id="GO:0000045">
    <property type="term" value="P:autophagosome assembly"/>
    <property type="evidence" value="ECO:0000318"/>
    <property type="project" value="GO_Central"/>
</dbReference>
<dbReference type="GO" id="GO:0051301">
    <property type="term" value="P:cell division"/>
    <property type="evidence" value="ECO:0007669"/>
    <property type="project" value="UniProtKB-KW"/>
</dbReference>
<dbReference type="GO" id="GO:0006995">
    <property type="term" value="P:cellular response to nitrogen starvation"/>
    <property type="evidence" value="ECO:0000318"/>
    <property type="project" value="GO_Central"/>
</dbReference>
<dbReference type="GO" id="GO:0051607">
    <property type="term" value="P:defense response to virus"/>
    <property type="evidence" value="ECO:0007669"/>
    <property type="project" value="UniProtKB-KW"/>
</dbReference>
<dbReference type="GO" id="GO:0045022">
    <property type="term" value="P:early endosome to late endosome transport"/>
    <property type="evidence" value="ECO:0000250"/>
    <property type="project" value="UniProtKB"/>
</dbReference>
<dbReference type="GO" id="GO:0045324">
    <property type="term" value="P:late endosome to vacuole transport"/>
    <property type="evidence" value="ECO:0000318"/>
    <property type="project" value="GO_Central"/>
</dbReference>
<dbReference type="GO" id="GO:0000423">
    <property type="term" value="P:mitophagy"/>
    <property type="evidence" value="ECO:0000318"/>
    <property type="project" value="GO_Central"/>
</dbReference>
<dbReference type="GO" id="GO:0010508">
    <property type="term" value="P:positive regulation of autophagy"/>
    <property type="evidence" value="ECO:0000250"/>
    <property type="project" value="UniProtKB"/>
</dbReference>
<dbReference type="GO" id="GO:0032465">
    <property type="term" value="P:regulation of cytokinesis"/>
    <property type="evidence" value="ECO:0000250"/>
    <property type="project" value="UniProtKB"/>
</dbReference>
<dbReference type="FunFam" id="1.10.418.40:FF:000001">
    <property type="entry name" value="beclin-1 isoform X1"/>
    <property type="match status" value="1"/>
</dbReference>
<dbReference type="Gene3D" id="6.10.250.3110">
    <property type="match status" value="1"/>
</dbReference>
<dbReference type="Gene3D" id="1.10.418.40">
    <property type="entry name" value="Autophagy protein 6/Beclin 1"/>
    <property type="match status" value="1"/>
</dbReference>
<dbReference type="InterPro" id="IPR007243">
    <property type="entry name" value="Atg6/Beclin"/>
</dbReference>
<dbReference type="InterPro" id="IPR038274">
    <property type="entry name" value="Atg6/Beclin_C_sf"/>
</dbReference>
<dbReference type="InterPro" id="IPR041691">
    <property type="entry name" value="Atg6/beclin_CC"/>
</dbReference>
<dbReference type="InterPro" id="IPR040455">
    <property type="entry name" value="Atg6_BARA"/>
</dbReference>
<dbReference type="InterPro" id="IPR029318">
    <property type="entry name" value="BH3_dom"/>
</dbReference>
<dbReference type="PANTHER" id="PTHR12768">
    <property type="entry name" value="BECLIN 1"/>
    <property type="match status" value="1"/>
</dbReference>
<dbReference type="PANTHER" id="PTHR12768:SF4">
    <property type="entry name" value="BECLIN-1"/>
    <property type="match status" value="1"/>
</dbReference>
<dbReference type="Pfam" id="PF04111">
    <property type="entry name" value="APG6"/>
    <property type="match status" value="1"/>
</dbReference>
<dbReference type="Pfam" id="PF17675">
    <property type="entry name" value="APG6_N"/>
    <property type="match status" value="1"/>
</dbReference>
<dbReference type="Pfam" id="PF15285">
    <property type="entry name" value="BH3"/>
    <property type="match status" value="1"/>
</dbReference>
<organism>
    <name type="scientific">Gallus gallus</name>
    <name type="common">Chicken</name>
    <dbReference type="NCBI Taxonomy" id="9031"/>
    <lineage>
        <taxon>Eukaryota</taxon>
        <taxon>Metazoa</taxon>
        <taxon>Chordata</taxon>
        <taxon>Craniata</taxon>
        <taxon>Vertebrata</taxon>
        <taxon>Euteleostomi</taxon>
        <taxon>Archelosauria</taxon>
        <taxon>Archosauria</taxon>
        <taxon>Dinosauria</taxon>
        <taxon>Saurischia</taxon>
        <taxon>Theropoda</taxon>
        <taxon>Coelurosauria</taxon>
        <taxon>Aves</taxon>
        <taxon>Neognathae</taxon>
        <taxon>Galloanserae</taxon>
        <taxon>Galliformes</taxon>
        <taxon>Phasianidae</taxon>
        <taxon>Phasianinae</taxon>
        <taxon>Gallus</taxon>
    </lineage>
</organism>
<gene>
    <name type="primary">BECN1</name>
    <name type="ORF">RCJMB04_9f22</name>
</gene>
<feature type="chain" id="PRO_0000316291" description="Beclin-1">
    <location>
        <begin position="1"/>
        <end position="447"/>
    </location>
</feature>
<feature type="region of interest" description="Disordered" evidence="4">
    <location>
        <begin position="44"/>
        <end position="71"/>
    </location>
</feature>
<feature type="region of interest" description="Evolutionary conserved domain (ECD)" evidence="2">
    <location>
        <begin position="242"/>
        <end position="447"/>
    </location>
</feature>
<feature type="region of interest" description="Required for membrane-association" evidence="2">
    <location>
        <begin position="422"/>
        <end position="447"/>
    </location>
</feature>
<feature type="coiled-coil region" evidence="3">
    <location>
        <begin position="139"/>
        <end position="266"/>
    </location>
</feature>
<feature type="short sequence motif" description="BH3" evidence="2">
    <location>
        <begin position="105"/>
        <end position="124"/>
    </location>
</feature>
<feature type="compositionally biased region" description="Low complexity" evidence="4">
    <location>
        <begin position="44"/>
        <end position="53"/>
    </location>
</feature>
<accession>Q5ZKS6</accession>
<sequence>MEGGRAPACTTQVSFVCQRCSQPLKLDTSFKILDRLTIQELTAPPLTAAPARPGDAQEESALSEEAFTEGRQDGVSRRFIPPARMMSTESANSFTLIGEASDGGTMENLSRRLKVTGDLFDIMSGQTDVDHPLCEECTDTLLDQLDTQLNITENECQNYKRCLEILEKMNEDDKEKLQTELKELALEEEQLIQELEDVEKNRKIVAEDFERVRAEAERLEQEEAQYQKEYCEFKRQQLELDDELKSVENQMRYAQMQLDKLKKTNVFNATFHIWHSGQFGTINNFRLGRLPSVPVEWNEINAAWGQTVLLLHALANKMGLKFQRYRLVPYGNHSYLESLTDKSKELPLYCSGGLRFFWDNKFDHAMVAFLDCVQQFKEEVEKGETRFCLPYRMDVEKGKIEDTGGSGGSYSIKTQFNSEEQWTKALKFMLTNLKWGLAWVSSQFYNK</sequence>
<reference key="1">
    <citation type="journal article" date="2005" name="Genome Biol.">
        <title>Full-length cDNAs from chicken bursal lymphocytes to facilitate gene function analysis.</title>
        <authorList>
            <person name="Caldwell R.B."/>
            <person name="Kierzek A.M."/>
            <person name="Arakawa H."/>
            <person name="Bezzubov Y."/>
            <person name="Zaim J."/>
            <person name="Fiedler P."/>
            <person name="Kutter S."/>
            <person name="Blagodatski A."/>
            <person name="Kostovska D."/>
            <person name="Koter M."/>
            <person name="Plachy J."/>
            <person name="Carninci P."/>
            <person name="Hayashizaki Y."/>
            <person name="Buerstedde J.-M."/>
        </authorList>
    </citation>
    <scope>NUCLEOTIDE SEQUENCE [LARGE SCALE MRNA]</scope>
    <source>
        <strain>CB</strain>
        <tissue>Bursa of Fabricius</tissue>
    </source>
</reference>
<comment type="function">
    <text evidence="2">Plays a central role in autophagy (By similarity). Acts as core subunit of different PI3K complex forms that mediate formation of phosphatidylinositol 3-phosphate and are believed to play a role in multiple membrane trafficking pathways such as initiation of autophagosomes, maturation of autophagosomes and endocytosis (By similarity). Involved in regulation of degradative endocytic trafficking and required for the abscission step in cytokinesis, probably in the context of PI3KC3-C2 (By similarity).</text>
</comment>
<comment type="subunit">
    <text evidence="2">Component of the PI3K (PI3KC3/PI3K-III/class III phosphatidylinositol 3-kinase) complex (By similarity).</text>
</comment>
<comment type="subcellular location">
    <subcellularLocation>
        <location evidence="1">Cytoplasm</location>
    </subcellularLocation>
    <subcellularLocation>
        <location evidence="2">Golgi apparatus</location>
        <location evidence="2">trans-Golgi network membrane</location>
        <topology evidence="2">Peripheral membrane protein</topology>
    </subcellularLocation>
    <subcellularLocation>
        <location evidence="2">Endosome membrane</location>
        <topology evidence="2">Peripheral membrane protein</topology>
    </subcellularLocation>
    <subcellularLocation>
        <location evidence="2">Endoplasmic reticulum membrane</location>
        <topology evidence="2">Peripheral membrane protein</topology>
    </subcellularLocation>
    <subcellularLocation>
        <location evidence="2">Mitochondrion membrane</location>
        <topology evidence="2">Peripheral membrane protein</topology>
    </subcellularLocation>
    <subcellularLocation>
        <location evidence="5">Cytoplasmic vesicle</location>
        <location evidence="5">Autophagosome</location>
    </subcellularLocation>
</comment>
<comment type="PTM">
    <text evidence="1 2">May be proteolytically processed by caspases; the C-terminal fragment(s) may induce apoptosis.</text>
</comment>
<comment type="similarity">
    <text evidence="5">Belongs to the beclin family.</text>
</comment>
<keyword id="KW-0051">Antiviral defense</keyword>
<keyword id="KW-0072">Autophagy</keyword>
<keyword id="KW-0131">Cell cycle</keyword>
<keyword id="KW-0132">Cell division</keyword>
<keyword id="KW-0175">Coiled coil</keyword>
<keyword id="KW-0963">Cytoplasm</keyword>
<keyword id="KW-0968">Cytoplasmic vesicle</keyword>
<keyword id="KW-0256">Endoplasmic reticulum</keyword>
<keyword id="KW-0967">Endosome</keyword>
<keyword id="KW-0333">Golgi apparatus</keyword>
<keyword id="KW-0472">Membrane</keyword>
<keyword id="KW-0496">Mitochondrion</keyword>
<keyword id="KW-1185">Reference proteome</keyword>
<proteinExistence type="evidence at transcript level"/>